<proteinExistence type="predicted"/>
<protein>
    <recommendedName>
        <fullName>Uncharacterized protein 3' to Asp-rich and His-rich proteins</fullName>
    </recommendedName>
</protein>
<reference key="1">
    <citation type="journal article" date="1987" name="Biochem. Biophys. Res. Commun.">
        <title>Cloning and sequencing of Plasmodium falciparum DNA fragments containing repetitive regions potentially coding for histidine-rich proteins: identification of two overlapping reading frames.</title>
        <authorList>
            <person name="Lenstra R."/>
            <person name="D'Auriol L."/>
            <person name="Andrieu B."/>
            <person name="le Bras J."/>
            <person name="Galibert F."/>
        </authorList>
    </citation>
    <scope>NUCLEOTIDE SEQUENCE [GENOMIC DNA]</scope>
</reference>
<name>YDH3_PLAFS</name>
<feature type="chain" id="PRO_0000217196" description="Uncharacterized protein 3' to Asp-rich and His-rich proteins">
    <location>
        <begin position="1" status="less than"/>
        <end position="53"/>
    </location>
</feature>
<feature type="non-terminal residue">
    <location>
        <position position="1"/>
    </location>
</feature>
<dbReference type="EMBL" id="M17028">
    <property type="protein sequence ID" value="AAA29622.1"/>
    <property type="molecule type" value="Genomic_DNA"/>
</dbReference>
<dbReference type="PIR" id="E29653">
    <property type="entry name" value="E29653"/>
</dbReference>
<organism>
    <name type="scientific">Plasmodium falciparum (isolate fcm17 / Senegal)</name>
    <dbReference type="NCBI Taxonomy" id="5845"/>
    <lineage>
        <taxon>Eukaryota</taxon>
        <taxon>Sar</taxon>
        <taxon>Alveolata</taxon>
        <taxon>Apicomplexa</taxon>
        <taxon>Aconoidasida</taxon>
        <taxon>Haemosporida</taxon>
        <taxon>Plasmodiidae</taxon>
        <taxon>Plasmodium</taxon>
        <taxon>Plasmodium (Laverania)</taxon>
    </lineage>
</organism>
<accession>P14589</accession>
<sequence length="53" mass="6650">PQYQFVGAKLFRWWCWRRRGWRRRWWLVIKLMLIETSFALDCEALCFSGVRQV</sequence>